<sequence>MLVYIAGSGAMGCRFGYQISKTNNDVILLDNWEDHINAIKENGLVVTGDVEETVKLPIMKPTEATQEADLIILFTKAMQLPQMLQDIKGIIGKETKVLCLLNGLGHEDVIRQYIPEHNILMGVTVWTAGLEGPGRAHLQGVGALNLQSMDPNNQDAGHQVADLLNKANLNATYDENVVPNIWRKACVNGTMNSTCALLDCTIGELFASEDGLKMVKEIIHEFVIVGQAEGVELNEEEITQYVMDTSVRAAHHYPSMHQDLVQNHRLTEIDFINGAVNTKGEKLGINTPYCRMITELVHAKEAVLNIQ</sequence>
<evidence type="ECO:0000250" key="1">
    <source>
        <dbReference type="UniProtKB" id="P0A9J4"/>
    </source>
</evidence>
<evidence type="ECO:0000305" key="2"/>
<protein>
    <recommendedName>
        <fullName evidence="1">2-dehydropantoate 2-reductase</fullName>
        <ecNumber evidence="1">1.1.1.169</ecNumber>
    </recommendedName>
    <alternativeName>
        <fullName evidence="1">Ketopantoate reductase</fullName>
        <shortName evidence="1">KPR</shortName>
    </alternativeName>
</protein>
<keyword id="KW-0963">Cytoplasm</keyword>
<keyword id="KW-0521">NADP</keyword>
<keyword id="KW-0560">Oxidoreductase</keyword>
<keyword id="KW-0566">Pantothenate biosynthesis</keyword>
<organism>
    <name type="scientific">Streptococcus pyogenes serotype M6 (strain ATCC BAA-946 / MGAS10394)</name>
    <dbReference type="NCBI Taxonomy" id="286636"/>
    <lineage>
        <taxon>Bacteria</taxon>
        <taxon>Bacillati</taxon>
        <taxon>Bacillota</taxon>
        <taxon>Bacilli</taxon>
        <taxon>Lactobacillales</taxon>
        <taxon>Streptococcaceae</taxon>
        <taxon>Streptococcus</taxon>
    </lineage>
</organism>
<comment type="function">
    <text evidence="1">Catalyzes the NADPH-dependent reduction of ketopantoate into pantoic acid.</text>
</comment>
<comment type="catalytic activity">
    <reaction evidence="1">
        <text>(R)-pantoate + NADP(+) = 2-dehydropantoate + NADPH + H(+)</text>
        <dbReference type="Rhea" id="RHEA:16233"/>
        <dbReference type="ChEBI" id="CHEBI:11561"/>
        <dbReference type="ChEBI" id="CHEBI:15378"/>
        <dbReference type="ChEBI" id="CHEBI:15980"/>
        <dbReference type="ChEBI" id="CHEBI:57783"/>
        <dbReference type="ChEBI" id="CHEBI:58349"/>
        <dbReference type="EC" id="1.1.1.169"/>
    </reaction>
</comment>
<comment type="pathway">
    <text evidence="1">Cofactor biosynthesis; (R)-pantothenate biosynthesis; (R)-pantoate from 3-methyl-2-oxobutanoate: step 2/2.</text>
</comment>
<comment type="subcellular location">
    <subcellularLocation>
        <location evidence="1">Cytoplasm</location>
    </subcellularLocation>
</comment>
<comment type="similarity">
    <text evidence="2">Belongs to the ketopantoate reductase family.</text>
</comment>
<name>PANE_STRP6</name>
<reference key="1">
    <citation type="journal article" date="2004" name="J. Infect. Dis.">
        <title>Progress toward characterization of the group A Streptococcus metagenome: complete genome sequence of a macrolide-resistant serotype M6 strain.</title>
        <authorList>
            <person name="Banks D.J."/>
            <person name="Porcella S.F."/>
            <person name="Barbian K.D."/>
            <person name="Beres S.B."/>
            <person name="Philips L.E."/>
            <person name="Voyich J.M."/>
            <person name="DeLeo F.R."/>
            <person name="Martin J.M."/>
            <person name="Somerville G.A."/>
            <person name="Musser J.M."/>
        </authorList>
    </citation>
    <scope>NUCLEOTIDE SEQUENCE [LARGE SCALE GENOMIC DNA]</scope>
    <source>
        <strain>ATCC BAA-946 / MGAS10394</strain>
    </source>
</reference>
<feature type="chain" id="PRO_0000157320" description="2-dehydropantoate 2-reductase">
    <location>
        <begin position="1"/>
        <end position="307"/>
    </location>
</feature>
<feature type="active site" description="Proton donor" evidence="1">
    <location>
        <position position="184"/>
    </location>
</feature>
<feature type="binding site" evidence="1">
    <location>
        <begin position="7"/>
        <end position="12"/>
    </location>
    <ligand>
        <name>NADP(+)</name>
        <dbReference type="ChEBI" id="CHEBI:58349"/>
    </ligand>
</feature>
<feature type="binding site" evidence="1">
    <location>
        <position position="102"/>
    </location>
    <ligand>
        <name>NADP(+)</name>
        <dbReference type="ChEBI" id="CHEBI:58349"/>
    </ligand>
</feature>
<feature type="binding site" evidence="1">
    <location>
        <position position="102"/>
    </location>
    <ligand>
        <name>substrate</name>
    </ligand>
</feature>
<feature type="binding site" evidence="1">
    <location>
        <position position="128"/>
    </location>
    <ligand>
        <name>NADP(+)</name>
        <dbReference type="ChEBI" id="CHEBI:58349"/>
    </ligand>
</feature>
<feature type="binding site" evidence="1">
    <location>
        <position position="188"/>
    </location>
    <ligand>
        <name>substrate</name>
    </ligand>
</feature>
<feature type="binding site" evidence="1">
    <location>
        <position position="192"/>
    </location>
    <ligand>
        <name>substrate</name>
    </ligand>
</feature>
<feature type="binding site" evidence="1">
    <location>
        <position position="255"/>
    </location>
    <ligand>
        <name>substrate</name>
    </ligand>
</feature>
<feature type="binding site" evidence="1">
    <location>
        <position position="268"/>
    </location>
    <ligand>
        <name>NADP(+)</name>
        <dbReference type="ChEBI" id="CHEBI:58349"/>
    </ligand>
</feature>
<proteinExistence type="inferred from homology"/>
<accession>Q5XCQ0</accession>
<dbReference type="EC" id="1.1.1.169" evidence="1"/>
<dbReference type="EMBL" id="CP000003">
    <property type="protein sequence ID" value="AAT86813.1"/>
    <property type="molecule type" value="Genomic_DNA"/>
</dbReference>
<dbReference type="RefSeq" id="WP_011184397.1">
    <property type="nucleotide sequence ID" value="NC_006086.1"/>
</dbReference>
<dbReference type="SMR" id="Q5XCQ0"/>
<dbReference type="KEGG" id="spa:M6_Spy0678"/>
<dbReference type="HOGENOM" id="CLU_031468_0_0_9"/>
<dbReference type="UniPathway" id="UPA00028">
    <property type="reaction ID" value="UER00004"/>
</dbReference>
<dbReference type="Proteomes" id="UP000001167">
    <property type="component" value="Chromosome"/>
</dbReference>
<dbReference type="GO" id="GO:0005737">
    <property type="term" value="C:cytoplasm"/>
    <property type="evidence" value="ECO:0007669"/>
    <property type="project" value="UniProtKB-SubCell"/>
</dbReference>
<dbReference type="GO" id="GO:0008677">
    <property type="term" value="F:2-dehydropantoate 2-reductase activity"/>
    <property type="evidence" value="ECO:0007669"/>
    <property type="project" value="UniProtKB-EC"/>
</dbReference>
<dbReference type="GO" id="GO:0050661">
    <property type="term" value="F:NADP binding"/>
    <property type="evidence" value="ECO:0007669"/>
    <property type="project" value="TreeGrafter"/>
</dbReference>
<dbReference type="GO" id="GO:0015940">
    <property type="term" value="P:pantothenate biosynthetic process"/>
    <property type="evidence" value="ECO:0007669"/>
    <property type="project" value="UniProtKB-UniPathway"/>
</dbReference>
<dbReference type="Gene3D" id="1.10.1040.10">
    <property type="entry name" value="N-(1-d-carboxylethyl)-l-norvaline Dehydrogenase, domain 2"/>
    <property type="match status" value="1"/>
</dbReference>
<dbReference type="Gene3D" id="3.40.50.720">
    <property type="entry name" value="NAD(P)-binding Rossmann-like Domain"/>
    <property type="match status" value="1"/>
</dbReference>
<dbReference type="InterPro" id="IPR008927">
    <property type="entry name" value="6-PGluconate_DH-like_C_sf"/>
</dbReference>
<dbReference type="InterPro" id="IPR013328">
    <property type="entry name" value="6PGD_dom2"/>
</dbReference>
<dbReference type="InterPro" id="IPR003710">
    <property type="entry name" value="ApbA"/>
</dbReference>
<dbReference type="InterPro" id="IPR050838">
    <property type="entry name" value="Ketopantoate_reductase"/>
</dbReference>
<dbReference type="InterPro" id="IPR013752">
    <property type="entry name" value="KPA_reductase"/>
</dbReference>
<dbReference type="InterPro" id="IPR013332">
    <property type="entry name" value="KPR_N"/>
</dbReference>
<dbReference type="InterPro" id="IPR036291">
    <property type="entry name" value="NAD(P)-bd_dom_sf"/>
</dbReference>
<dbReference type="NCBIfam" id="TIGR00745">
    <property type="entry name" value="apbA_panE"/>
    <property type="match status" value="1"/>
</dbReference>
<dbReference type="NCBIfam" id="NF005088">
    <property type="entry name" value="PRK06522.1-2"/>
    <property type="match status" value="1"/>
</dbReference>
<dbReference type="PANTHER" id="PTHR43765:SF2">
    <property type="entry name" value="2-DEHYDROPANTOATE 2-REDUCTASE"/>
    <property type="match status" value="1"/>
</dbReference>
<dbReference type="PANTHER" id="PTHR43765">
    <property type="entry name" value="2-DEHYDROPANTOATE 2-REDUCTASE-RELATED"/>
    <property type="match status" value="1"/>
</dbReference>
<dbReference type="Pfam" id="PF02558">
    <property type="entry name" value="ApbA"/>
    <property type="match status" value="1"/>
</dbReference>
<dbReference type="Pfam" id="PF08546">
    <property type="entry name" value="ApbA_C"/>
    <property type="match status" value="1"/>
</dbReference>
<dbReference type="SUPFAM" id="SSF48179">
    <property type="entry name" value="6-phosphogluconate dehydrogenase C-terminal domain-like"/>
    <property type="match status" value="1"/>
</dbReference>
<dbReference type="SUPFAM" id="SSF51735">
    <property type="entry name" value="NAD(P)-binding Rossmann-fold domains"/>
    <property type="match status" value="1"/>
</dbReference>
<gene>
    <name type="primary">apbA</name>
    <name type="ordered locus">M6_Spy0678</name>
</gene>